<dbReference type="EMBL" id="CP000084">
    <property type="protein sequence ID" value="AAZ21907.1"/>
    <property type="molecule type" value="Genomic_DNA"/>
</dbReference>
<dbReference type="RefSeq" id="WP_006996824.1">
    <property type="nucleotide sequence ID" value="NC_007205.1"/>
</dbReference>
<dbReference type="SMR" id="Q4FLN1"/>
<dbReference type="STRING" id="335992.SAR11_1104"/>
<dbReference type="GeneID" id="66295593"/>
<dbReference type="KEGG" id="pub:SAR11_1104"/>
<dbReference type="eggNOG" id="COG0199">
    <property type="taxonomic scope" value="Bacteria"/>
</dbReference>
<dbReference type="HOGENOM" id="CLU_139869_0_1_5"/>
<dbReference type="OrthoDB" id="9810484at2"/>
<dbReference type="Proteomes" id="UP000002528">
    <property type="component" value="Chromosome"/>
</dbReference>
<dbReference type="GO" id="GO:0005737">
    <property type="term" value="C:cytoplasm"/>
    <property type="evidence" value="ECO:0007669"/>
    <property type="project" value="UniProtKB-ARBA"/>
</dbReference>
<dbReference type="GO" id="GO:0015935">
    <property type="term" value="C:small ribosomal subunit"/>
    <property type="evidence" value="ECO:0007669"/>
    <property type="project" value="TreeGrafter"/>
</dbReference>
<dbReference type="GO" id="GO:0019843">
    <property type="term" value="F:rRNA binding"/>
    <property type="evidence" value="ECO:0007669"/>
    <property type="project" value="UniProtKB-UniRule"/>
</dbReference>
<dbReference type="GO" id="GO:0003735">
    <property type="term" value="F:structural constituent of ribosome"/>
    <property type="evidence" value="ECO:0007669"/>
    <property type="project" value="InterPro"/>
</dbReference>
<dbReference type="GO" id="GO:0006412">
    <property type="term" value="P:translation"/>
    <property type="evidence" value="ECO:0007669"/>
    <property type="project" value="UniProtKB-UniRule"/>
</dbReference>
<dbReference type="FunFam" id="1.10.287.1480:FF:000001">
    <property type="entry name" value="30S ribosomal protein S14"/>
    <property type="match status" value="1"/>
</dbReference>
<dbReference type="Gene3D" id="1.10.287.1480">
    <property type="match status" value="1"/>
</dbReference>
<dbReference type="HAMAP" id="MF_00537">
    <property type="entry name" value="Ribosomal_uS14_1"/>
    <property type="match status" value="1"/>
</dbReference>
<dbReference type="InterPro" id="IPR001209">
    <property type="entry name" value="Ribosomal_uS14"/>
</dbReference>
<dbReference type="InterPro" id="IPR023036">
    <property type="entry name" value="Ribosomal_uS14_bac/plastid"/>
</dbReference>
<dbReference type="InterPro" id="IPR018271">
    <property type="entry name" value="Ribosomal_uS14_CS"/>
</dbReference>
<dbReference type="NCBIfam" id="NF006477">
    <property type="entry name" value="PRK08881.1"/>
    <property type="match status" value="1"/>
</dbReference>
<dbReference type="PANTHER" id="PTHR19836">
    <property type="entry name" value="30S RIBOSOMAL PROTEIN S14"/>
    <property type="match status" value="1"/>
</dbReference>
<dbReference type="PANTHER" id="PTHR19836:SF19">
    <property type="entry name" value="SMALL RIBOSOMAL SUBUNIT PROTEIN US14M"/>
    <property type="match status" value="1"/>
</dbReference>
<dbReference type="Pfam" id="PF00253">
    <property type="entry name" value="Ribosomal_S14"/>
    <property type="match status" value="1"/>
</dbReference>
<dbReference type="SUPFAM" id="SSF57716">
    <property type="entry name" value="Glucocorticoid receptor-like (DNA-binding domain)"/>
    <property type="match status" value="1"/>
</dbReference>
<dbReference type="PROSITE" id="PS00527">
    <property type="entry name" value="RIBOSOMAL_S14"/>
    <property type="match status" value="1"/>
</dbReference>
<proteinExistence type="inferred from homology"/>
<gene>
    <name evidence="1" type="primary">rpsN</name>
    <name type="ordered locus">SAR11_1104</name>
</gene>
<name>RS14_PELUB</name>
<protein>
    <recommendedName>
        <fullName evidence="1">Small ribosomal subunit protein uS14</fullName>
    </recommendedName>
    <alternativeName>
        <fullName evidence="2">30S ribosomal protein S14</fullName>
    </alternativeName>
</protein>
<sequence>MAKVSAVNKNNKRIKLSDRLFKKRQALKKIVMDKKISLEERFKAQQKLSNLPRNSAKNRVMNRCQITGRPHGVYRKLKISRIALRDLGLHGLIPGMTKSSW</sequence>
<comment type="function">
    <text evidence="1">Binds 16S rRNA, required for the assembly of 30S particles and may also be responsible for determining the conformation of the 16S rRNA at the A site.</text>
</comment>
<comment type="subunit">
    <text evidence="1">Part of the 30S ribosomal subunit. Contacts proteins S3 and S10.</text>
</comment>
<comment type="similarity">
    <text evidence="1">Belongs to the universal ribosomal protein uS14 family.</text>
</comment>
<keyword id="KW-1185">Reference proteome</keyword>
<keyword id="KW-0687">Ribonucleoprotein</keyword>
<keyword id="KW-0689">Ribosomal protein</keyword>
<keyword id="KW-0694">RNA-binding</keyword>
<keyword id="KW-0699">rRNA-binding</keyword>
<feature type="chain" id="PRO_1000128484" description="Small ribosomal subunit protein uS14">
    <location>
        <begin position="1"/>
        <end position="101"/>
    </location>
</feature>
<evidence type="ECO:0000255" key="1">
    <source>
        <dbReference type="HAMAP-Rule" id="MF_00537"/>
    </source>
</evidence>
<evidence type="ECO:0000305" key="2"/>
<reference key="1">
    <citation type="journal article" date="2005" name="Science">
        <title>Genome streamlining in a cosmopolitan oceanic bacterium.</title>
        <authorList>
            <person name="Giovannoni S.J."/>
            <person name="Tripp H.J."/>
            <person name="Givan S."/>
            <person name="Podar M."/>
            <person name="Vergin K.L."/>
            <person name="Baptista D."/>
            <person name="Bibbs L."/>
            <person name="Eads J."/>
            <person name="Richardson T.H."/>
            <person name="Noordewier M."/>
            <person name="Rappe M.S."/>
            <person name="Short J.M."/>
            <person name="Carrington J.C."/>
            <person name="Mathur E.J."/>
        </authorList>
    </citation>
    <scope>NUCLEOTIDE SEQUENCE [LARGE SCALE GENOMIC DNA]</scope>
    <source>
        <strain>HTCC1062</strain>
    </source>
</reference>
<accession>Q4FLN1</accession>
<organism>
    <name type="scientific">Pelagibacter ubique (strain HTCC1062)</name>
    <dbReference type="NCBI Taxonomy" id="335992"/>
    <lineage>
        <taxon>Bacteria</taxon>
        <taxon>Pseudomonadati</taxon>
        <taxon>Pseudomonadota</taxon>
        <taxon>Alphaproteobacteria</taxon>
        <taxon>Candidatus Pelagibacterales</taxon>
        <taxon>Candidatus Pelagibacteraceae</taxon>
        <taxon>Candidatus Pelagibacter</taxon>
    </lineage>
</organism>